<dbReference type="EMBL" id="BN001302">
    <property type="protein sequence ID" value="CBF73438.1"/>
    <property type="molecule type" value="Genomic_DNA"/>
</dbReference>
<dbReference type="EMBL" id="AACD01000135">
    <property type="protein sequence ID" value="EAA59531.1"/>
    <property type="molecule type" value="Genomic_DNA"/>
</dbReference>
<dbReference type="RefSeq" id="XP_681146.1">
    <property type="nucleotide sequence ID" value="XM_676054.1"/>
</dbReference>
<dbReference type="SMR" id="Q5AV03"/>
<dbReference type="STRING" id="227321.Q5AV03"/>
<dbReference type="GlyCosmos" id="Q5AV03">
    <property type="glycosylation" value="1 site, No reported glycans"/>
</dbReference>
<dbReference type="EnsemblFungi" id="CBF73438">
    <property type="protein sequence ID" value="CBF73438"/>
    <property type="gene ID" value="ANIA_07877"/>
</dbReference>
<dbReference type="GeneID" id="2869180"/>
<dbReference type="KEGG" id="ani:ANIA_07877"/>
<dbReference type="VEuPathDB" id="FungiDB:AN7877"/>
<dbReference type="eggNOG" id="ENOG502RZA5">
    <property type="taxonomic scope" value="Eukaryota"/>
</dbReference>
<dbReference type="HOGENOM" id="CLU_033465_3_0_1"/>
<dbReference type="InParanoid" id="Q5AV03"/>
<dbReference type="OMA" id="NIMHPGF"/>
<dbReference type="OrthoDB" id="5384040at2759"/>
<dbReference type="Proteomes" id="UP000000560">
    <property type="component" value="Chromosome II"/>
</dbReference>
<dbReference type="GO" id="GO:0016020">
    <property type="term" value="C:membrane"/>
    <property type="evidence" value="ECO:0007669"/>
    <property type="project" value="UniProtKB-SubCell"/>
</dbReference>
<dbReference type="GO" id="GO:0006869">
    <property type="term" value="P:lipid transport"/>
    <property type="evidence" value="ECO:0007669"/>
    <property type="project" value="UniProtKB-KW"/>
</dbReference>
<dbReference type="InterPro" id="IPR007568">
    <property type="entry name" value="RTA1"/>
</dbReference>
<dbReference type="PANTHER" id="PTHR31465:SF15">
    <property type="entry name" value="LIPID TRANSPORTER ATNI-RELATED"/>
    <property type="match status" value="1"/>
</dbReference>
<dbReference type="PANTHER" id="PTHR31465">
    <property type="entry name" value="PROTEIN RTA1-RELATED"/>
    <property type="match status" value="1"/>
</dbReference>
<dbReference type="Pfam" id="PF04479">
    <property type="entry name" value="RTA1"/>
    <property type="match status" value="1"/>
</dbReference>
<comment type="function">
    <text evidence="4 5 6">Probable lipid transporter; part of the gene cluster that mediates the biosynthesis of aspercryptins, linear lipopeptides built from six amino acids including 2 highly unusual and nonproteogenic amino acids, 2-amino-octanoic acid (2aoa) and 2-amino-dodecanol (2adol) (PubMed:23248299, PubMed:26563584, PubMed:27310134). The core structure of aspercryptins is as follows: Ser/Ala-Thr-Ile/Val-2aoa-Asn-2adol (PubMed:27310134). The first step of aspercryptin biosynthesis is the generation of the fatty acid precursors, octanoic and dodecanoic acids, by the FAS subunits atnF and atnM (PubMed:26563584, PubMed:27310134). The fatty acid precursors are likely transformed into the corresponding alpha-amino fatty acids in three steps (PubMed:26563584, PubMed:27310134). First, they are hydroxylated by the cytochrome P450 monooxygenase atnE, then oxidized to the corresponding alpha-keto acids by the NAD(P)-dependent oxidoreductase atnD, and finally converted to the alpha-amino fatty acids by the PLP-dependent aminotransferases atnH or atnJ (PubMed:26563584, PubMed:27310134). the alpha-amino fatty acids, 2-amino-octanoic and 2-amino-dodecanoic acids, are recognized, activated, and covalently tethered to the NRPS atnA by its fourth and sixth adenylation domains (PubMed:27310134). The second module of atnA is the Thr module and contains an epimerase (E) domain responsible for the epimerization of Thr to D-allo-Thr (PubMed:26563584). Additionally, despite atnA having only one epimerase domain, the first amino acid of aspercryptin A1 is D-Ser, suggesting that serine is either loaded directly as D-Ser on the first module or that the epimerase domain in the threonine module epimerizes both L-Ser and L-Thr (PubMed:27310134). After condensation of the hexapeptide of aspercryptin, the C-terminal reductase (TE) domain might be involved in the reductive release and production of the aldehyde hexapeptide (PubMed:26563584). Further reduction would generate aspercryptins (PubMed:26563584, PubMed:27310134). The variety of aspercryptins produced reflects the flexibility of the atnA NRPS, allowing incorporation of alanine instead of serine, valine for isoleucine, and a C10 fatty amino alcohol instead of the C12 version (PubMed:27310134). AtnB seems to be involved in the selectivity for Ile versus Val by the third module (PubMed:26563584). Moreover, type B, C and D aspercryptins have an additional N-terminal cichorine, acetyl and propionyl group respectively (PubMed:27310134).</text>
</comment>
<comment type="pathway">
    <text evidence="5">Secondary metabolite biosynthesis.</text>
</comment>
<comment type="subcellular location">
    <subcellularLocation>
        <location evidence="1">Membrane</location>
        <topology evidence="1">Multi-pass membrane protein</topology>
    </subcellularLocation>
</comment>
<comment type="induction">
    <text evidence="6">Expression is positively regulated by the aspercryptin cluser-specific transcription factor atnN (PubMed:27310134).</text>
</comment>
<comment type="disruption phenotype">
    <text evidence="5">Eliminates more than 70% of aspercryptin production (PubMed:26563584).</text>
</comment>
<comment type="similarity">
    <text evidence="8">Belongs to the lipid-translocating exporter (LTE) (TC 9.A.26.1) family.</text>
</comment>
<evidence type="ECO:0000255" key="1"/>
<evidence type="ECO:0000255" key="2">
    <source>
        <dbReference type="PROSITE-ProRule" id="PRU00498"/>
    </source>
</evidence>
<evidence type="ECO:0000256" key="3">
    <source>
        <dbReference type="SAM" id="MobiDB-lite"/>
    </source>
</evidence>
<evidence type="ECO:0000269" key="4">
    <source>
    </source>
</evidence>
<evidence type="ECO:0000269" key="5">
    <source>
    </source>
</evidence>
<evidence type="ECO:0000269" key="6">
    <source>
    </source>
</evidence>
<evidence type="ECO:0000303" key="7">
    <source>
    </source>
</evidence>
<evidence type="ECO:0000305" key="8"/>
<reference key="1">
    <citation type="journal article" date="2005" name="Nature">
        <title>Sequencing of Aspergillus nidulans and comparative analysis with A. fumigatus and A. oryzae.</title>
        <authorList>
            <person name="Galagan J.E."/>
            <person name="Calvo S.E."/>
            <person name="Cuomo C."/>
            <person name="Ma L.-J."/>
            <person name="Wortman J.R."/>
            <person name="Batzoglou S."/>
            <person name="Lee S.-I."/>
            <person name="Bastuerkmen M."/>
            <person name="Spevak C.C."/>
            <person name="Clutterbuck J."/>
            <person name="Kapitonov V."/>
            <person name="Jurka J."/>
            <person name="Scazzocchio C."/>
            <person name="Farman M.L."/>
            <person name="Butler J."/>
            <person name="Purcell S."/>
            <person name="Harris S."/>
            <person name="Braus G.H."/>
            <person name="Draht O."/>
            <person name="Busch S."/>
            <person name="D'Enfert C."/>
            <person name="Bouchier C."/>
            <person name="Goldman G.H."/>
            <person name="Bell-Pedersen D."/>
            <person name="Griffiths-Jones S."/>
            <person name="Doonan J.H."/>
            <person name="Yu J."/>
            <person name="Vienken K."/>
            <person name="Pain A."/>
            <person name="Freitag M."/>
            <person name="Selker E.U."/>
            <person name="Archer D.B."/>
            <person name="Penalva M.A."/>
            <person name="Oakley B.R."/>
            <person name="Momany M."/>
            <person name="Tanaka T."/>
            <person name="Kumagai T."/>
            <person name="Asai K."/>
            <person name="Machida M."/>
            <person name="Nierman W.C."/>
            <person name="Denning D.W."/>
            <person name="Caddick M.X."/>
            <person name="Hynes M."/>
            <person name="Paoletti M."/>
            <person name="Fischer R."/>
            <person name="Miller B.L."/>
            <person name="Dyer P.S."/>
            <person name="Sachs M.S."/>
            <person name="Osmani S.A."/>
            <person name="Birren B.W."/>
        </authorList>
    </citation>
    <scope>NUCLEOTIDE SEQUENCE [LARGE SCALE GENOMIC DNA]</scope>
    <source>
        <strain>FGSC A4 / ATCC 38163 / CBS 112.46 / NRRL 194 / M139</strain>
    </source>
</reference>
<reference key="2">
    <citation type="journal article" date="2009" name="Fungal Genet. Biol.">
        <title>The 2008 update of the Aspergillus nidulans genome annotation: a community effort.</title>
        <authorList>
            <person name="Wortman J.R."/>
            <person name="Gilsenan J.M."/>
            <person name="Joardar V."/>
            <person name="Deegan J."/>
            <person name="Clutterbuck J."/>
            <person name="Andersen M.R."/>
            <person name="Archer D."/>
            <person name="Bencina M."/>
            <person name="Braus G."/>
            <person name="Coutinho P."/>
            <person name="von Dohren H."/>
            <person name="Doonan J."/>
            <person name="Driessen A.J."/>
            <person name="Durek P."/>
            <person name="Espeso E."/>
            <person name="Fekete E."/>
            <person name="Flipphi M."/>
            <person name="Estrada C.G."/>
            <person name="Geysens S."/>
            <person name="Goldman G."/>
            <person name="de Groot P.W."/>
            <person name="Hansen K."/>
            <person name="Harris S.D."/>
            <person name="Heinekamp T."/>
            <person name="Helmstaedt K."/>
            <person name="Henrissat B."/>
            <person name="Hofmann G."/>
            <person name="Homan T."/>
            <person name="Horio T."/>
            <person name="Horiuchi H."/>
            <person name="James S."/>
            <person name="Jones M."/>
            <person name="Karaffa L."/>
            <person name="Karanyi Z."/>
            <person name="Kato M."/>
            <person name="Keller N."/>
            <person name="Kelly D.E."/>
            <person name="Kiel J.A."/>
            <person name="Kim J.M."/>
            <person name="van der Klei I.J."/>
            <person name="Klis F.M."/>
            <person name="Kovalchuk A."/>
            <person name="Krasevec N."/>
            <person name="Kubicek C.P."/>
            <person name="Liu B."/>
            <person name="Maccabe A."/>
            <person name="Meyer V."/>
            <person name="Mirabito P."/>
            <person name="Miskei M."/>
            <person name="Mos M."/>
            <person name="Mullins J."/>
            <person name="Nelson D.R."/>
            <person name="Nielsen J."/>
            <person name="Oakley B.R."/>
            <person name="Osmani S.A."/>
            <person name="Pakula T."/>
            <person name="Paszewski A."/>
            <person name="Paulsen I."/>
            <person name="Pilsyk S."/>
            <person name="Pocsi I."/>
            <person name="Punt P.J."/>
            <person name="Ram A.F."/>
            <person name="Ren Q."/>
            <person name="Robellet X."/>
            <person name="Robson G."/>
            <person name="Seiboth B."/>
            <person name="van Solingen P."/>
            <person name="Specht T."/>
            <person name="Sun J."/>
            <person name="Taheri-Talesh N."/>
            <person name="Takeshita N."/>
            <person name="Ussery D."/>
            <person name="vanKuyk P.A."/>
            <person name="Visser H."/>
            <person name="van de Vondervoort P.J."/>
            <person name="de Vries R.P."/>
            <person name="Walton J."/>
            <person name="Xiang X."/>
            <person name="Xiong Y."/>
            <person name="Zeng A.P."/>
            <person name="Brandt B.W."/>
            <person name="Cornell M.J."/>
            <person name="van den Hondel C.A."/>
            <person name="Visser J."/>
            <person name="Oliver S.G."/>
            <person name="Turner G."/>
        </authorList>
    </citation>
    <scope>GENOME REANNOTATION</scope>
    <source>
        <strain>FGSC A4 / ATCC 38163 / CBS 112.46 / NRRL 194 / M139</strain>
    </source>
</reference>
<reference key="3">
    <citation type="journal article" date="2013" name="Proc. Natl. Acad. Sci. U.S.A.">
        <title>Accurate prediction of secondary metabolite gene clusters in filamentous fungi.</title>
        <authorList>
            <person name="Andersen M.R."/>
            <person name="Nielsen J.B."/>
            <person name="Klitgaard A."/>
            <person name="Petersen L.M."/>
            <person name="Zachariasen M."/>
            <person name="Hansen T.J."/>
            <person name="Blicher L.H."/>
            <person name="Gotfredsen C.H."/>
            <person name="Larsen T.O."/>
            <person name="Nielsen K.F."/>
            <person name="Mortensen U.H."/>
        </authorList>
    </citation>
    <scope>IDENTIFICATION OF THE CLUSTER</scope>
</reference>
<reference key="4">
    <citation type="journal article" date="2016" name="ACS Chem. Biol.">
        <title>New aspercryptins, lipopeptide natural products, revealed by HDAC inhibition in Aspergillus nidulans.</title>
        <authorList>
            <person name="Henke M.T."/>
            <person name="Soukup A.A."/>
            <person name="Goering A.W."/>
            <person name="McClure R.A."/>
            <person name="Thomson R.J."/>
            <person name="Keller N.P."/>
            <person name="Kelleher N.L."/>
        </authorList>
    </citation>
    <scope>FUNCTION</scope>
    <scope>INDUCTION</scope>
</reference>
<reference key="5">
    <citation type="journal article" date="2016" name="Angew. Chem. Int. Ed.">
        <title>Development of genetic dereplication strains in Aspergillus nidulans results in the discovery of aspercryptin.</title>
        <authorList>
            <person name="Chiang Y.M."/>
            <person name="Ahuja M."/>
            <person name="Oakley C.E."/>
            <person name="Entwistle R."/>
            <person name="Asokan A."/>
            <person name="Zutz C."/>
            <person name="Wang C.C."/>
            <person name="Oakley B.R."/>
        </authorList>
    </citation>
    <scope>FUNCTION</scope>
    <scope>DISRUPTION PHENOTYPE</scope>
    <scope>PATHWAY</scope>
</reference>
<organism>
    <name type="scientific">Emericella nidulans (strain FGSC A4 / ATCC 38163 / CBS 112.46 / NRRL 194 / M139)</name>
    <name type="common">Aspergillus nidulans</name>
    <dbReference type="NCBI Taxonomy" id="227321"/>
    <lineage>
        <taxon>Eukaryota</taxon>
        <taxon>Fungi</taxon>
        <taxon>Dikarya</taxon>
        <taxon>Ascomycota</taxon>
        <taxon>Pezizomycotina</taxon>
        <taxon>Eurotiomycetes</taxon>
        <taxon>Eurotiomycetidae</taxon>
        <taxon>Eurotiales</taxon>
        <taxon>Aspergillaceae</taxon>
        <taxon>Aspergillus</taxon>
        <taxon>Aspergillus subgen. Nidulantes</taxon>
    </lineage>
</organism>
<keyword id="KW-0325">Glycoprotein</keyword>
<keyword id="KW-0445">Lipid transport</keyword>
<keyword id="KW-0472">Membrane</keyword>
<keyword id="KW-1185">Reference proteome</keyword>
<keyword id="KW-0812">Transmembrane</keyword>
<keyword id="KW-1133">Transmembrane helix</keyword>
<keyword id="KW-0813">Transport</keyword>
<feature type="chain" id="PRO_0000444137" description="Probable lipid transporter atnI">
    <location>
        <begin position="1"/>
        <end position="383"/>
    </location>
</feature>
<feature type="transmembrane region" description="Helical" evidence="1">
    <location>
        <begin position="46"/>
        <end position="66"/>
    </location>
</feature>
<feature type="transmembrane region" description="Helical" evidence="1">
    <location>
        <begin position="71"/>
        <end position="91"/>
    </location>
</feature>
<feature type="transmembrane region" description="Helical" evidence="1">
    <location>
        <begin position="104"/>
        <end position="124"/>
    </location>
</feature>
<feature type="transmembrane region" description="Helical" evidence="1">
    <location>
        <begin position="144"/>
        <end position="164"/>
    </location>
</feature>
<feature type="transmembrane region" description="Helical" evidence="1">
    <location>
        <begin position="182"/>
        <end position="202"/>
    </location>
</feature>
<feature type="transmembrane region" description="Helical" evidence="1">
    <location>
        <begin position="231"/>
        <end position="251"/>
    </location>
</feature>
<feature type="transmembrane region" description="Helical" evidence="1">
    <location>
        <begin position="269"/>
        <end position="289"/>
    </location>
</feature>
<feature type="region of interest" description="Disordered" evidence="3">
    <location>
        <begin position="305"/>
        <end position="383"/>
    </location>
</feature>
<feature type="compositionally biased region" description="Basic residues" evidence="3">
    <location>
        <begin position="307"/>
        <end position="316"/>
    </location>
</feature>
<feature type="compositionally biased region" description="Basic and acidic residues" evidence="3">
    <location>
        <begin position="317"/>
        <end position="329"/>
    </location>
</feature>
<feature type="glycosylation site" description="N-linked (GlcNAc...) asparagine" evidence="2">
    <location>
        <position position="94"/>
    </location>
</feature>
<name>ATNI_EMENI</name>
<protein>
    <recommendedName>
        <fullName evidence="7">Probable lipid transporter atnI</fullName>
    </recommendedName>
    <alternativeName>
        <fullName evidence="7">Aspercryptin biosynthesis cluster protein I</fullName>
    </alternativeName>
</protein>
<accession>Q5AV03</accession>
<accession>A0A1U8QQT2</accession>
<accession>C8V3Y2</accession>
<gene>
    <name evidence="7" type="primary">atnI</name>
    <name type="ORF">ANIA_07877</name>
</gene>
<proteinExistence type="evidence at transcript level"/>
<sequence>MSATTTSASETSTPTCLPIPPKENGYVPPGGCGNIHMYEASFAAPVLFSVLFGLTTIIHIVQAIMFKKRYAWVVIMSSLWELIAFIMRSLFAKNQSSDAYNTPFTIFFLLAPIWVNAFLYMTLGRLIYFFLPSGRLGGIGAKRFGHIFVWLEILAFIIQLVGAAFTTDTEASQETIMRGVHIYMGGIGVQELFILIFTGLFIHLQRKMGEMERHGTLDAEKVGRGSMPWRWLFYAIYASLFLITVRIIFRLAQYADGTNIDNPALRNEWFEYVWDAAPIFICLAILNVAHPGRVLVGPDSEFPRVSRKEKKQRKREKKEAKIAEKEAKKERKRRRKHGSIGVDLLDAQERGSAPTSRPAPGGHGYQGENQRTWYDNRGNEVRP</sequence>